<reference key="1">
    <citation type="journal article" date="1998" name="Science">
        <title>Complete genome sequence of Treponema pallidum, the syphilis spirochete.</title>
        <authorList>
            <person name="Fraser C.M."/>
            <person name="Norris S.J."/>
            <person name="Weinstock G.M."/>
            <person name="White O."/>
            <person name="Sutton G.G."/>
            <person name="Dodson R.J."/>
            <person name="Gwinn M.L."/>
            <person name="Hickey E.K."/>
            <person name="Clayton R.A."/>
            <person name="Ketchum K.A."/>
            <person name="Sodergren E."/>
            <person name="Hardham J.M."/>
            <person name="McLeod M.P."/>
            <person name="Salzberg S.L."/>
            <person name="Peterson J.D."/>
            <person name="Khalak H.G."/>
            <person name="Richardson D.L."/>
            <person name="Howell J.K."/>
            <person name="Chidambaram M."/>
            <person name="Utterback T.R."/>
            <person name="McDonald L.A."/>
            <person name="Artiach P."/>
            <person name="Bowman C."/>
            <person name="Cotton M.D."/>
            <person name="Fujii C."/>
            <person name="Garland S.A."/>
            <person name="Hatch B."/>
            <person name="Horst K."/>
            <person name="Roberts K.M."/>
            <person name="Sandusky M."/>
            <person name="Weidman J.F."/>
            <person name="Smith H.O."/>
            <person name="Venter J.C."/>
        </authorList>
    </citation>
    <scope>NUCLEOTIDE SEQUENCE [LARGE SCALE GENOMIC DNA]</scope>
    <source>
        <strain>Nichols</strain>
    </source>
</reference>
<name>MNME_TREPA</name>
<dbReference type="EC" id="3.6.-.-" evidence="1"/>
<dbReference type="EMBL" id="AE000520">
    <property type="protein sequence ID" value="AAC65535.1"/>
    <property type="molecule type" value="Genomic_DNA"/>
</dbReference>
<dbReference type="PIR" id="B71311">
    <property type="entry name" value="B71311"/>
</dbReference>
<dbReference type="RefSeq" id="WP_010881997.1">
    <property type="nucleotide sequence ID" value="NC_021490.2"/>
</dbReference>
<dbReference type="SMR" id="O83561"/>
<dbReference type="IntAct" id="O83561">
    <property type="interactions" value="1"/>
</dbReference>
<dbReference type="STRING" id="243276.TP_0550"/>
<dbReference type="EnsemblBacteria" id="AAC65535">
    <property type="protein sequence ID" value="AAC65535"/>
    <property type="gene ID" value="TP_0550"/>
</dbReference>
<dbReference type="GeneID" id="93876319"/>
<dbReference type="KEGG" id="tpa:TP_0550"/>
<dbReference type="KEGG" id="tpw:TPANIC_0550"/>
<dbReference type="eggNOG" id="COG0486">
    <property type="taxonomic scope" value="Bacteria"/>
</dbReference>
<dbReference type="HOGENOM" id="CLU_019624_4_1_12"/>
<dbReference type="OrthoDB" id="9805918at2"/>
<dbReference type="Proteomes" id="UP000000811">
    <property type="component" value="Chromosome"/>
</dbReference>
<dbReference type="GO" id="GO:0005829">
    <property type="term" value="C:cytosol"/>
    <property type="evidence" value="ECO:0007669"/>
    <property type="project" value="TreeGrafter"/>
</dbReference>
<dbReference type="GO" id="GO:0005525">
    <property type="term" value="F:GTP binding"/>
    <property type="evidence" value="ECO:0007669"/>
    <property type="project" value="UniProtKB-UniRule"/>
</dbReference>
<dbReference type="GO" id="GO:0003924">
    <property type="term" value="F:GTPase activity"/>
    <property type="evidence" value="ECO:0007669"/>
    <property type="project" value="UniProtKB-UniRule"/>
</dbReference>
<dbReference type="GO" id="GO:0046872">
    <property type="term" value="F:metal ion binding"/>
    <property type="evidence" value="ECO:0007669"/>
    <property type="project" value="UniProtKB-KW"/>
</dbReference>
<dbReference type="GO" id="GO:0030488">
    <property type="term" value="P:tRNA methylation"/>
    <property type="evidence" value="ECO:0007669"/>
    <property type="project" value="TreeGrafter"/>
</dbReference>
<dbReference type="GO" id="GO:0002098">
    <property type="term" value="P:tRNA wobble uridine modification"/>
    <property type="evidence" value="ECO:0007669"/>
    <property type="project" value="TreeGrafter"/>
</dbReference>
<dbReference type="CDD" id="cd04164">
    <property type="entry name" value="trmE"/>
    <property type="match status" value="1"/>
</dbReference>
<dbReference type="CDD" id="cd14858">
    <property type="entry name" value="TrmE_N"/>
    <property type="match status" value="1"/>
</dbReference>
<dbReference type="Gene3D" id="3.40.50.300">
    <property type="entry name" value="P-loop containing nucleotide triphosphate hydrolases"/>
    <property type="match status" value="1"/>
</dbReference>
<dbReference type="Gene3D" id="3.30.1360.120">
    <property type="entry name" value="Probable tRNA modification gtpase trme, domain 1"/>
    <property type="match status" value="1"/>
</dbReference>
<dbReference type="Gene3D" id="1.20.120.430">
    <property type="entry name" value="tRNA modification GTPase MnmE domain 2"/>
    <property type="match status" value="1"/>
</dbReference>
<dbReference type="HAMAP" id="MF_00379">
    <property type="entry name" value="GTPase_MnmE"/>
    <property type="match status" value="1"/>
</dbReference>
<dbReference type="InterPro" id="IPR031168">
    <property type="entry name" value="G_TrmE"/>
</dbReference>
<dbReference type="InterPro" id="IPR006073">
    <property type="entry name" value="GTP-bd"/>
</dbReference>
<dbReference type="InterPro" id="IPR018948">
    <property type="entry name" value="GTP-bd_TrmE_N"/>
</dbReference>
<dbReference type="InterPro" id="IPR004520">
    <property type="entry name" value="GTPase_MnmE"/>
</dbReference>
<dbReference type="InterPro" id="IPR027368">
    <property type="entry name" value="MnmE_dom2"/>
</dbReference>
<dbReference type="InterPro" id="IPR025867">
    <property type="entry name" value="MnmE_helical"/>
</dbReference>
<dbReference type="InterPro" id="IPR027417">
    <property type="entry name" value="P-loop_NTPase"/>
</dbReference>
<dbReference type="InterPro" id="IPR005225">
    <property type="entry name" value="Small_GTP-bd"/>
</dbReference>
<dbReference type="InterPro" id="IPR027266">
    <property type="entry name" value="TrmE/GcvT_dom1"/>
</dbReference>
<dbReference type="NCBIfam" id="TIGR00450">
    <property type="entry name" value="mnmE_trmE_thdF"/>
    <property type="match status" value="1"/>
</dbReference>
<dbReference type="NCBIfam" id="TIGR00231">
    <property type="entry name" value="small_GTP"/>
    <property type="match status" value="1"/>
</dbReference>
<dbReference type="PANTHER" id="PTHR42714">
    <property type="entry name" value="TRNA MODIFICATION GTPASE GTPBP3"/>
    <property type="match status" value="1"/>
</dbReference>
<dbReference type="PANTHER" id="PTHR42714:SF2">
    <property type="entry name" value="TRNA MODIFICATION GTPASE GTPBP3, MITOCHONDRIAL"/>
    <property type="match status" value="1"/>
</dbReference>
<dbReference type="Pfam" id="PF01926">
    <property type="entry name" value="MMR_HSR1"/>
    <property type="match status" value="1"/>
</dbReference>
<dbReference type="Pfam" id="PF12631">
    <property type="entry name" value="MnmE_helical"/>
    <property type="match status" value="1"/>
</dbReference>
<dbReference type="Pfam" id="PF10396">
    <property type="entry name" value="TrmE_N"/>
    <property type="match status" value="1"/>
</dbReference>
<dbReference type="SUPFAM" id="SSF52540">
    <property type="entry name" value="P-loop containing nucleoside triphosphate hydrolases"/>
    <property type="match status" value="1"/>
</dbReference>
<dbReference type="PROSITE" id="PS51709">
    <property type="entry name" value="G_TRME"/>
    <property type="match status" value="1"/>
</dbReference>
<accession>O83561</accession>
<feature type="chain" id="PRO_0000188941" description="tRNA modification GTPase MnmE">
    <location>
        <begin position="1"/>
        <end position="495"/>
    </location>
</feature>
<feature type="domain" description="TrmE-type G">
    <location>
        <begin position="223"/>
        <end position="417"/>
    </location>
</feature>
<feature type="binding site" evidence="1">
    <location>
        <position position="28"/>
    </location>
    <ligand>
        <name>(6S)-5-formyl-5,6,7,8-tetrahydrofolate</name>
        <dbReference type="ChEBI" id="CHEBI:57457"/>
    </ligand>
</feature>
<feature type="binding site" evidence="1">
    <location>
        <position position="89"/>
    </location>
    <ligand>
        <name>(6S)-5-formyl-5,6,7,8-tetrahydrofolate</name>
        <dbReference type="ChEBI" id="CHEBI:57457"/>
    </ligand>
</feature>
<feature type="binding site" evidence="1">
    <location>
        <position position="128"/>
    </location>
    <ligand>
        <name>(6S)-5-formyl-5,6,7,8-tetrahydrofolate</name>
        <dbReference type="ChEBI" id="CHEBI:57457"/>
    </ligand>
</feature>
<feature type="binding site" evidence="1">
    <location>
        <begin position="233"/>
        <end position="238"/>
    </location>
    <ligand>
        <name>GTP</name>
        <dbReference type="ChEBI" id="CHEBI:37565"/>
    </ligand>
</feature>
<feature type="binding site" evidence="1">
    <location>
        <position position="233"/>
    </location>
    <ligand>
        <name>K(+)</name>
        <dbReference type="ChEBI" id="CHEBI:29103"/>
    </ligand>
</feature>
<feature type="binding site" evidence="1">
    <location>
        <position position="237"/>
    </location>
    <ligand>
        <name>Mg(2+)</name>
        <dbReference type="ChEBI" id="CHEBI:18420"/>
    </ligand>
</feature>
<feature type="binding site" evidence="1">
    <location>
        <begin position="252"/>
        <end position="258"/>
    </location>
    <ligand>
        <name>GTP</name>
        <dbReference type="ChEBI" id="CHEBI:37565"/>
    </ligand>
</feature>
<feature type="binding site" evidence="1">
    <location>
        <position position="252"/>
    </location>
    <ligand>
        <name>K(+)</name>
        <dbReference type="ChEBI" id="CHEBI:29103"/>
    </ligand>
</feature>
<feature type="binding site" evidence="1">
    <location>
        <position position="254"/>
    </location>
    <ligand>
        <name>K(+)</name>
        <dbReference type="ChEBI" id="CHEBI:29103"/>
    </ligand>
</feature>
<feature type="binding site" evidence="1">
    <location>
        <position position="257"/>
    </location>
    <ligand>
        <name>K(+)</name>
        <dbReference type="ChEBI" id="CHEBI:29103"/>
    </ligand>
</feature>
<feature type="binding site" evidence="1">
    <location>
        <position position="258"/>
    </location>
    <ligand>
        <name>Mg(2+)</name>
        <dbReference type="ChEBI" id="CHEBI:18420"/>
    </ligand>
</feature>
<feature type="binding site" evidence="1">
    <location>
        <begin position="277"/>
        <end position="280"/>
    </location>
    <ligand>
        <name>GTP</name>
        <dbReference type="ChEBI" id="CHEBI:37565"/>
    </ligand>
</feature>
<feature type="binding site" evidence="1">
    <location>
        <position position="495"/>
    </location>
    <ligand>
        <name>(6S)-5-formyl-5,6,7,8-tetrahydrofolate</name>
        <dbReference type="ChEBI" id="CHEBI:57457"/>
    </ligand>
</feature>
<proteinExistence type="inferred from homology"/>
<protein>
    <recommendedName>
        <fullName evidence="1">tRNA modification GTPase MnmE</fullName>
        <ecNumber evidence="1">3.6.-.-</ecNumber>
    </recommendedName>
</protein>
<keyword id="KW-0963">Cytoplasm</keyword>
<keyword id="KW-0342">GTP-binding</keyword>
<keyword id="KW-0378">Hydrolase</keyword>
<keyword id="KW-0460">Magnesium</keyword>
<keyword id="KW-0479">Metal-binding</keyword>
<keyword id="KW-0547">Nucleotide-binding</keyword>
<keyword id="KW-0630">Potassium</keyword>
<keyword id="KW-1185">Reference proteome</keyword>
<keyword id="KW-0819">tRNA processing</keyword>
<evidence type="ECO:0000255" key="1">
    <source>
        <dbReference type="HAMAP-Rule" id="MF_00379"/>
    </source>
</evidence>
<comment type="function">
    <text evidence="1">Exhibits a very high intrinsic GTPase hydrolysis rate. Involved in the addition of a carboxymethylaminomethyl (cmnm) group at the wobble position (U34) of certain tRNAs, forming tRNA-cmnm(5)s(2)U34.</text>
</comment>
<comment type="cofactor">
    <cofactor evidence="1">
        <name>K(+)</name>
        <dbReference type="ChEBI" id="CHEBI:29103"/>
    </cofactor>
    <text evidence="1">Binds 1 potassium ion per subunit.</text>
</comment>
<comment type="subunit">
    <text evidence="1">Homodimer. Heterotetramer of two MnmE and two MnmG subunits.</text>
</comment>
<comment type="subcellular location">
    <subcellularLocation>
        <location evidence="1">Cytoplasm</location>
    </subcellularLocation>
</comment>
<comment type="similarity">
    <text evidence="1">Belongs to the TRAFAC class TrmE-Era-EngA-EngB-Septin-like GTPase superfamily. TrmE GTPase family.</text>
</comment>
<sequence>MRAHEYALDDDIVAIATALSPAALGIVRTSGSSSIERVASFFSRAQALTRARAHTFLHGWILDGKTRVDEVVLLVYRAPHSFTGEHAVEIICHGGVRTVQAVYRLCLAQGFRAAQRGEFSFRSFFHGKRDLTRIEAIQSLVDARTCAAQQQAVLHLSGALQQEIAALTRALLAFSATLQGEIEYPEDEETRVHDIDMRELEPLVERLRRLRACWQERALQRTGVRIVLGGCPNAGKSSLFNALLGQDRAIVSSVPGTTRDWLEADLDLSGIPVRLCDTAGLRVTDNPIEAQGVVRSEQLLQGADCVFYIINGRAGVQAADCAFLSDCAVPLVVVVTHNDLMSMSERIQVCQAVQPFISAPVLSCARSQDARGAGEQCLAGGKNGEVRDRAPRAFVCVSAKTHAGLDALRAQTLHLLHGGQVPYEELSLGSERQYVLVDAAVQALEHAQEAYARGFGLDAVVHDLEEALYHCGALTGEVHSEDILDALFEKLCVGK</sequence>
<organism>
    <name type="scientific">Treponema pallidum (strain Nichols)</name>
    <dbReference type="NCBI Taxonomy" id="243276"/>
    <lineage>
        <taxon>Bacteria</taxon>
        <taxon>Pseudomonadati</taxon>
        <taxon>Spirochaetota</taxon>
        <taxon>Spirochaetia</taxon>
        <taxon>Spirochaetales</taxon>
        <taxon>Treponemataceae</taxon>
        <taxon>Treponema</taxon>
    </lineage>
</organism>
<gene>
    <name evidence="1" type="primary">mnmE</name>
    <name evidence="1" type="synonym">thdF</name>
    <name evidence="1" type="synonym">trmE</name>
    <name type="ordered locus">TP_0550</name>
</gene>